<name>FBP12_MOUSE</name>
<keyword id="KW-0446">Lipid-binding</keyword>
<keyword id="KW-1185">Reference proteome</keyword>
<keyword id="KW-0813">Transport</keyword>
<organism>
    <name type="scientific">Mus musculus</name>
    <name type="common">Mouse</name>
    <dbReference type="NCBI Taxonomy" id="10090"/>
    <lineage>
        <taxon>Eukaryota</taxon>
        <taxon>Metazoa</taxon>
        <taxon>Chordata</taxon>
        <taxon>Craniata</taxon>
        <taxon>Vertebrata</taxon>
        <taxon>Euteleostomi</taxon>
        <taxon>Mammalia</taxon>
        <taxon>Eutheria</taxon>
        <taxon>Euarchontoglires</taxon>
        <taxon>Glires</taxon>
        <taxon>Rodentia</taxon>
        <taxon>Myomorpha</taxon>
        <taxon>Muroidea</taxon>
        <taxon>Muridae</taxon>
        <taxon>Murinae</taxon>
        <taxon>Mus</taxon>
        <taxon>Mus</taxon>
    </lineage>
</organism>
<feature type="chain" id="PRO_0000342882" description="Fatty acid-binding protein 12">
    <location>
        <begin position="1"/>
        <end position="132"/>
    </location>
</feature>
<feature type="binding site" evidence="1">
    <location>
        <position position="107"/>
    </location>
    <ligand>
        <name>a fatty acid</name>
        <dbReference type="ChEBI" id="CHEBI:28868"/>
    </ligand>
</feature>
<feature type="binding site" evidence="1">
    <location>
        <begin position="127"/>
        <end position="129"/>
    </location>
    <ligand>
        <name>a fatty acid</name>
        <dbReference type="ChEBI" id="CHEBI:28868"/>
    </ligand>
</feature>
<dbReference type="EMBL" id="EU733649">
    <property type="protein sequence ID" value="ACI03639.1"/>
    <property type="molecule type" value="mRNA"/>
</dbReference>
<dbReference type="EMBL" id="AK005765">
    <property type="protein sequence ID" value="BAB24227.1"/>
    <property type="molecule type" value="mRNA"/>
</dbReference>
<dbReference type="EMBL" id="CH466577">
    <property type="protein sequence ID" value="EDL05167.1"/>
    <property type="molecule type" value="Genomic_DNA"/>
</dbReference>
<dbReference type="EMBL" id="CH466577">
    <property type="protein sequence ID" value="EDL05168.1"/>
    <property type="molecule type" value="Genomic_DNA"/>
</dbReference>
<dbReference type="EMBL" id="BC030910">
    <property type="protein sequence ID" value="AAH30910.1"/>
    <property type="molecule type" value="mRNA"/>
</dbReference>
<dbReference type="CCDS" id="CCDS17239.1"/>
<dbReference type="RefSeq" id="NP_001344088.1">
    <property type="nucleotide sequence ID" value="NM_001357159.1"/>
</dbReference>
<dbReference type="RefSeq" id="NP_001344089.1">
    <property type="nucleotide sequence ID" value="NM_001357160.1"/>
</dbReference>
<dbReference type="RefSeq" id="NP_001344090.1">
    <property type="nucleotide sequence ID" value="NM_001357161.1"/>
</dbReference>
<dbReference type="RefSeq" id="NP_083586.1">
    <property type="nucleotide sequence ID" value="NM_029310.1"/>
</dbReference>
<dbReference type="RefSeq" id="XP_006530156.1">
    <property type="nucleotide sequence ID" value="XM_006530093.3"/>
</dbReference>
<dbReference type="RefSeq" id="XP_006530157.1">
    <property type="nucleotide sequence ID" value="XM_006530094.3"/>
</dbReference>
<dbReference type="RefSeq" id="XP_006530158.1">
    <property type="nucleotide sequence ID" value="XM_006530095.3"/>
</dbReference>
<dbReference type="RefSeq" id="XP_006530159.1">
    <property type="nucleotide sequence ID" value="XM_006530096.4"/>
</dbReference>
<dbReference type="RefSeq" id="XP_006530160.1">
    <property type="nucleotide sequence ID" value="XM_006530097.3"/>
</dbReference>
<dbReference type="RefSeq" id="XP_006530162.1">
    <property type="nucleotide sequence ID" value="XM_006530099.5"/>
</dbReference>
<dbReference type="RefSeq" id="XP_017175272.1">
    <property type="nucleotide sequence ID" value="XM_017319783.2"/>
</dbReference>
<dbReference type="RefSeq" id="XP_036019263.1">
    <property type="nucleotide sequence ID" value="XM_036163370.1"/>
</dbReference>
<dbReference type="RefSeq" id="XP_036019264.1">
    <property type="nucleotide sequence ID" value="XM_036163371.1"/>
</dbReference>
<dbReference type="SMR" id="Q9DAK4"/>
<dbReference type="FunCoup" id="Q9DAK4">
    <property type="interactions" value="622"/>
</dbReference>
<dbReference type="STRING" id="10090.ENSMUSP00000029043"/>
<dbReference type="PhosphoSitePlus" id="Q9DAK4"/>
<dbReference type="jPOST" id="Q9DAK4"/>
<dbReference type="PaxDb" id="10090-ENSMUSP00000029043"/>
<dbReference type="ProteomicsDB" id="272958"/>
<dbReference type="Antibodypedia" id="49988">
    <property type="antibodies" value="72 antibodies from 16 providers"/>
</dbReference>
<dbReference type="DNASU" id="75497"/>
<dbReference type="Ensembl" id="ENSMUST00000029043.13">
    <property type="protein sequence ID" value="ENSMUSP00000029043.7"/>
    <property type="gene ID" value="ENSMUSG00000027530.16"/>
</dbReference>
<dbReference type="Ensembl" id="ENSMUST00000117917.8">
    <property type="protein sequence ID" value="ENSMUSP00000112464.2"/>
    <property type="gene ID" value="ENSMUSG00000027530.16"/>
</dbReference>
<dbReference type="Ensembl" id="ENSMUST00000119761.2">
    <property type="protein sequence ID" value="ENSMUSP00000112958.2"/>
    <property type="gene ID" value="ENSMUSG00000027530.16"/>
</dbReference>
<dbReference type="Ensembl" id="ENSMUST00000172126.8">
    <property type="protein sequence ID" value="ENSMUSP00000131101.2"/>
    <property type="gene ID" value="ENSMUSG00000027530.16"/>
</dbReference>
<dbReference type="GeneID" id="75497"/>
<dbReference type="KEGG" id="mmu:75497"/>
<dbReference type="UCSC" id="uc008opm.1">
    <property type="organism name" value="mouse"/>
</dbReference>
<dbReference type="AGR" id="MGI:1922747"/>
<dbReference type="CTD" id="646486"/>
<dbReference type="MGI" id="MGI:1922747">
    <property type="gene designation" value="Fabp12"/>
</dbReference>
<dbReference type="VEuPathDB" id="HostDB:ENSMUSG00000027530"/>
<dbReference type="eggNOG" id="KOG4015">
    <property type="taxonomic scope" value="Eukaryota"/>
</dbReference>
<dbReference type="GeneTree" id="ENSGT00940000162398"/>
<dbReference type="HOGENOM" id="CLU_113772_0_0_1"/>
<dbReference type="InParanoid" id="Q9DAK4"/>
<dbReference type="OMA" id="DWDGKEN"/>
<dbReference type="OrthoDB" id="412780at2759"/>
<dbReference type="PhylomeDB" id="Q9DAK4"/>
<dbReference type="TreeFam" id="TF316894"/>
<dbReference type="Reactome" id="R-MMU-163560">
    <property type="pathway name" value="Triglyceride catabolism"/>
</dbReference>
<dbReference type="BioGRID-ORCS" id="75497">
    <property type="hits" value="5 hits in 79 CRISPR screens"/>
</dbReference>
<dbReference type="PRO" id="PR:Q9DAK4"/>
<dbReference type="Proteomes" id="UP000000589">
    <property type="component" value="Chromosome 3"/>
</dbReference>
<dbReference type="RNAct" id="Q9DAK4">
    <property type="molecule type" value="protein"/>
</dbReference>
<dbReference type="Bgee" id="ENSMUSG00000027530">
    <property type="expression patterns" value="Expressed in retinal neural layer and 34 other cell types or tissues"/>
</dbReference>
<dbReference type="GO" id="GO:0008289">
    <property type="term" value="F:lipid binding"/>
    <property type="evidence" value="ECO:0007669"/>
    <property type="project" value="UniProtKB-KW"/>
</dbReference>
<dbReference type="CDD" id="cd19617">
    <property type="entry name" value="FABP12"/>
    <property type="match status" value="1"/>
</dbReference>
<dbReference type="FunFam" id="2.40.128.20:FF:000001">
    <property type="entry name" value="Fatty acid-binding protein, adipocyte"/>
    <property type="match status" value="1"/>
</dbReference>
<dbReference type="Gene3D" id="2.40.128.20">
    <property type="match status" value="1"/>
</dbReference>
<dbReference type="InterPro" id="IPR012674">
    <property type="entry name" value="Calycin"/>
</dbReference>
<dbReference type="InterPro" id="IPR000463">
    <property type="entry name" value="Fatty_acid-bd"/>
</dbReference>
<dbReference type="InterPro" id="IPR031259">
    <property type="entry name" value="ILBP"/>
</dbReference>
<dbReference type="InterPro" id="IPR000566">
    <property type="entry name" value="Lipocln_cytosolic_FA-bd_dom"/>
</dbReference>
<dbReference type="PANTHER" id="PTHR11955">
    <property type="entry name" value="FATTY ACID BINDING PROTEIN"/>
    <property type="match status" value="1"/>
</dbReference>
<dbReference type="Pfam" id="PF00061">
    <property type="entry name" value="Lipocalin"/>
    <property type="match status" value="1"/>
</dbReference>
<dbReference type="PRINTS" id="PR00178">
    <property type="entry name" value="FATTYACIDBP"/>
</dbReference>
<dbReference type="SUPFAM" id="SSF50814">
    <property type="entry name" value="Lipocalins"/>
    <property type="match status" value="1"/>
</dbReference>
<accession>Q9DAK4</accession>
<accession>B7SUM9</accession>
<gene>
    <name type="primary">Fabp12</name>
</gene>
<proteinExistence type="evidence at transcript level"/>
<comment type="function">
    <text evidence="1">May play a role in lipid transport.</text>
</comment>
<comment type="tissue specificity">
    <text evidence="2">Highly expressed in adult retina and testis.</text>
</comment>
<comment type="similarity">
    <text evidence="3">Belongs to the calycin superfamily. Fatty-acid binding protein (FABP) family.</text>
</comment>
<protein>
    <recommendedName>
        <fullName>Fatty acid-binding protein 12</fullName>
    </recommendedName>
</protein>
<reference key="1">
    <citation type="journal article" date="2008" name="Genomics">
        <title>A novel fatty acid-binding protein (FABP) gene resulting from tandem gene duplication in mammals: transcription in rat retina and testis.</title>
        <authorList>
            <person name="Liu R.Z."/>
            <person name="Li X."/>
            <person name="Godbout R."/>
        </authorList>
    </citation>
    <scope>NUCLEOTIDE SEQUENCE [MRNA]</scope>
    <scope>TISSUE SPECIFICITY</scope>
    <source>
        <strain>C57BL/6J</strain>
        <tissue>Retina</tissue>
    </source>
</reference>
<reference key="2">
    <citation type="journal article" date="2005" name="Science">
        <title>The transcriptional landscape of the mammalian genome.</title>
        <authorList>
            <person name="Carninci P."/>
            <person name="Kasukawa T."/>
            <person name="Katayama S."/>
            <person name="Gough J."/>
            <person name="Frith M.C."/>
            <person name="Maeda N."/>
            <person name="Oyama R."/>
            <person name="Ravasi T."/>
            <person name="Lenhard B."/>
            <person name="Wells C."/>
            <person name="Kodzius R."/>
            <person name="Shimokawa K."/>
            <person name="Bajic V.B."/>
            <person name="Brenner S.E."/>
            <person name="Batalov S."/>
            <person name="Forrest A.R."/>
            <person name="Zavolan M."/>
            <person name="Davis M.J."/>
            <person name="Wilming L.G."/>
            <person name="Aidinis V."/>
            <person name="Allen J.E."/>
            <person name="Ambesi-Impiombato A."/>
            <person name="Apweiler R."/>
            <person name="Aturaliya R.N."/>
            <person name="Bailey T.L."/>
            <person name="Bansal M."/>
            <person name="Baxter L."/>
            <person name="Beisel K.W."/>
            <person name="Bersano T."/>
            <person name="Bono H."/>
            <person name="Chalk A.M."/>
            <person name="Chiu K.P."/>
            <person name="Choudhary V."/>
            <person name="Christoffels A."/>
            <person name="Clutterbuck D.R."/>
            <person name="Crowe M.L."/>
            <person name="Dalla E."/>
            <person name="Dalrymple B.P."/>
            <person name="de Bono B."/>
            <person name="Della Gatta G."/>
            <person name="di Bernardo D."/>
            <person name="Down T."/>
            <person name="Engstrom P."/>
            <person name="Fagiolini M."/>
            <person name="Faulkner G."/>
            <person name="Fletcher C.F."/>
            <person name="Fukushima T."/>
            <person name="Furuno M."/>
            <person name="Futaki S."/>
            <person name="Gariboldi M."/>
            <person name="Georgii-Hemming P."/>
            <person name="Gingeras T.R."/>
            <person name="Gojobori T."/>
            <person name="Green R.E."/>
            <person name="Gustincich S."/>
            <person name="Harbers M."/>
            <person name="Hayashi Y."/>
            <person name="Hensch T.K."/>
            <person name="Hirokawa N."/>
            <person name="Hill D."/>
            <person name="Huminiecki L."/>
            <person name="Iacono M."/>
            <person name="Ikeo K."/>
            <person name="Iwama A."/>
            <person name="Ishikawa T."/>
            <person name="Jakt M."/>
            <person name="Kanapin A."/>
            <person name="Katoh M."/>
            <person name="Kawasawa Y."/>
            <person name="Kelso J."/>
            <person name="Kitamura H."/>
            <person name="Kitano H."/>
            <person name="Kollias G."/>
            <person name="Krishnan S.P."/>
            <person name="Kruger A."/>
            <person name="Kummerfeld S.K."/>
            <person name="Kurochkin I.V."/>
            <person name="Lareau L.F."/>
            <person name="Lazarevic D."/>
            <person name="Lipovich L."/>
            <person name="Liu J."/>
            <person name="Liuni S."/>
            <person name="McWilliam S."/>
            <person name="Madan Babu M."/>
            <person name="Madera M."/>
            <person name="Marchionni L."/>
            <person name="Matsuda H."/>
            <person name="Matsuzawa S."/>
            <person name="Miki H."/>
            <person name="Mignone F."/>
            <person name="Miyake S."/>
            <person name="Morris K."/>
            <person name="Mottagui-Tabar S."/>
            <person name="Mulder N."/>
            <person name="Nakano N."/>
            <person name="Nakauchi H."/>
            <person name="Ng P."/>
            <person name="Nilsson R."/>
            <person name="Nishiguchi S."/>
            <person name="Nishikawa S."/>
            <person name="Nori F."/>
            <person name="Ohara O."/>
            <person name="Okazaki Y."/>
            <person name="Orlando V."/>
            <person name="Pang K.C."/>
            <person name="Pavan W.J."/>
            <person name="Pavesi G."/>
            <person name="Pesole G."/>
            <person name="Petrovsky N."/>
            <person name="Piazza S."/>
            <person name="Reed J."/>
            <person name="Reid J.F."/>
            <person name="Ring B.Z."/>
            <person name="Ringwald M."/>
            <person name="Rost B."/>
            <person name="Ruan Y."/>
            <person name="Salzberg S.L."/>
            <person name="Sandelin A."/>
            <person name="Schneider C."/>
            <person name="Schoenbach C."/>
            <person name="Sekiguchi K."/>
            <person name="Semple C.A."/>
            <person name="Seno S."/>
            <person name="Sessa L."/>
            <person name="Sheng Y."/>
            <person name="Shibata Y."/>
            <person name="Shimada H."/>
            <person name="Shimada K."/>
            <person name="Silva D."/>
            <person name="Sinclair B."/>
            <person name="Sperling S."/>
            <person name="Stupka E."/>
            <person name="Sugiura K."/>
            <person name="Sultana R."/>
            <person name="Takenaka Y."/>
            <person name="Taki K."/>
            <person name="Tammoja K."/>
            <person name="Tan S.L."/>
            <person name="Tang S."/>
            <person name="Taylor M.S."/>
            <person name="Tegner J."/>
            <person name="Teichmann S.A."/>
            <person name="Ueda H.R."/>
            <person name="van Nimwegen E."/>
            <person name="Verardo R."/>
            <person name="Wei C.L."/>
            <person name="Yagi K."/>
            <person name="Yamanishi H."/>
            <person name="Zabarovsky E."/>
            <person name="Zhu S."/>
            <person name="Zimmer A."/>
            <person name="Hide W."/>
            <person name="Bult C."/>
            <person name="Grimmond S.M."/>
            <person name="Teasdale R.D."/>
            <person name="Liu E.T."/>
            <person name="Brusic V."/>
            <person name="Quackenbush J."/>
            <person name="Wahlestedt C."/>
            <person name="Mattick J.S."/>
            <person name="Hume D.A."/>
            <person name="Kai C."/>
            <person name="Sasaki D."/>
            <person name="Tomaru Y."/>
            <person name="Fukuda S."/>
            <person name="Kanamori-Katayama M."/>
            <person name="Suzuki M."/>
            <person name="Aoki J."/>
            <person name="Arakawa T."/>
            <person name="Iida J."/>
            <person name="Imamura K."/>
            <person name="Itoh M."/>
            <person name="Kato T."/>
            <person name="Kawaji H."/>
            <person name="Kawagashira N."/>
            <person name="Kawashima T."/>
            <person name="Kojima M."/>
            <person name="Kondo S."/>
            <person name="Konno H."/>
            <person name="Nakano K."/>
            <person name="Ninomiya N."/>
            <person name="Nishio T."/>
            <person name="Okada M."/>
            <person name="Plessy C."/>
            <person name="Shibata K."/>
            <person name="Shiraki T."/>
            <person name="Suzuki S."/>
            <person name="Tagami M."/>
            <person name="Waki K."/>
            <person name="Watahiki A."/>
            <person name="Okamura-Oho Y."/>
            <person name="Suzuki H."/>
            <person name="Kawai J."/>
            <person name="Hayashizaki Y."/>
        </authorList>
    </citation>
    <scope>NUCLEOTIDE SEQUENCE [LARGE SCALE MRNA]</scope>
    <source>
        <strain>C57BL/6J</strain>
        <tissue>Testis</tissue>
    </source>
</reference>
<reference key="3">
    <citation type="submission" date="2005-09" db="EMBL/GenBank/DDBJ databases">
        <authorList>
            <person name="Mural R.J."/>
            <person name="Adams M.D."/>
            <person name="Myers E.W."/>
            <person name="Smith H.O."/>
            <person name="Venter J.C."/>
        </authorList>
    </citation>
    <scope>NUCLEOTIDE SEQUENCE [LARGE SCALE GENOMIC DNA]</scope>
</reference>
<reference key="4">
    <citation type="journal article" date="2004" name="Genome Res.">
        <title>The status, quality, and expansion of the NIH full-length cDNA project: the Mammalian Gene Collection (MGC).</title>
        <authorList>
            <consortium name="The MGC Project Team"/>
        </authorList>
    </citation>
    <scope>NUCLEOTIDE SEQUENCE [LARGE SCALE MRNA]</scope>
    <source>
        <strain>C57BL/6J</strain>
        <tissue>Retina</tissue>
    </source>
</reference>
<evidence type="ECO:0000250" key="1"/>
<evidence type="ECO:0000269" key="2">
    <source>
    </source>
</evidence>
<evidence type="ECO:0000305" key="3"/>
<sequence>MVDQLQGTWKSVSCDNFENYMKELGVGRASRKLGCLAKPTVTISTDGDLITIKTKSIFKNKEISFKLGEEFEETTPSGRKSKSTVILDNDSLVQVQDWDGKEATICRRLVDGKMVVESAVNNVTCTRTYQRV</sequence>